<evidence type="ECO:0000250" key="1"/>
<evidence type="ECO:0000255" key="2">
    <source>
        <dbReference type="PROSITE-ProRule" id="PRU00309"/>
    </source>
</evidence>
<evidence type="ECO:0000256" key="3">
    <source>
        <dbReference type="SAM" id="MobiDB-lite"/>
    </source>
</evidence>
<accession>Q0P5B4</accession>
<name>THAP3_BOVIN</name>
<organism>
    <name type="scientific">Bos taurus</name>
    <name type="common">Bovine</name>
    <dbReference type="NCBI Taxonomy" id="9913"/>
    <lineage>
        <taxon>Eukaryota</taxon>
        <taxon>Metazoa</taxon>
        <taxon>Chordata</taxon>
        <taxon>Craniata</taxon>
        <taxon>Vertebrata</taxon>
        <taxon>Euteleostomi</taxon>
        <taxon>Mammalia</taxon>
        <taxon>Eutheria</taxon>
        <taxon>Laurasiatheria</taxon>
        <taxon>Artiodactyla</taxon>
        <taxon>Ruminantia</taxon>
        <taxon>Pecora</taxon>
        <taxon>Bovidae</taxon>
        <taxon>Bovinae</taxon>
        <taxon>Bos</taxon>
    </lineage>
</organism>
<dbReference type="EMBL" id="BC120270">
    <property type="protein sequence ID" value="AAI20271.1"/>
    <property type="molecule type" value="mRNA"/>
</dbReference>
<dbReference type="RefSeq" id="NP_001068815.1">
    <property type="nucleotide sequence ID" value="NM_001075347.1"/>
</dbReference>
<dbReference type="SMR" id="Q0P5B4"/>
<dbReference type="FunCoup" id="Q0P5B4">
    <property type="interactions" value="903"/>
</dbReference>
<dbReference type="STRING" id="9913.ENSBTAP00000014893"/>
<dbReference type="PaxDb" id="9913-ENSBTAP00000014893"/>
<dbReference type="Ensembl" id="ENSBTAT00000014893.5">
    <property type="protein sequence ID" value="ENSBTAP00000014893.3"/>
    <property type="gene ID" value="ENSBTAG00000011214.6"/>
</dbReference>
<dbReference type="GeneID" id="508138"/>
<dbReference type="KEGG" id="bta:508138"/>
<dbReference type="CTD" id="90326"/>
<dbReference type="VEuPathDB" id="HostDB:ENSBTAG00000011214"/>
<dbReference type="VGNC" id="VGNC:35822">
    <property type="gene designation" value="THAP3"/>
</dbReference>
<dbReference type="eggNOG" id="ENOG502S14P">
    <property type="taxonomic scope" value="Eukaryota"/>
</dbReference>
<dbReference type="GeneTree" id="ENSGT00940000162344"/>
<dbReference type="HOGENOM" id="CLU_076186_1_0_1"/>
<dbReference type="InParanoid" id="Q0P5B4"/>
<dbReference type="OMA" id="ACKGHWG"/>
<dbReference type="OrthoDB" id="6496718at2759"/>
<dbReference type="TreeFam" id="TF330127"/>
<dbReference type="Proteomes" id="UP000009136">
    <property type="component" value="Chromosome 16"/>
</dbReference>
<dbReference type="Bgee" id="ENSBTAG00000011214">
    <property type="expression patterns" value="Expressed in retina and 106 other cell types or tissues"/>
</dbReference>
<dbReference type="GO" id="GO:0003677">
    <property type="term" value="F:DNA binding"/>
    <property type="evidence" value="ECO:0007669"/>
    <property type="project" value="UniProtKB-KW"/>
</dbReference>
<dbReference type="GO" id="GO:0008270">
    <property type="term" value="F:zinc ion binding"/>
    <property type="evidence" value="ECO:0007669"/>
    <property type="project" value="UniProtKB-KW"/>
</dbReference>
<dbReference type="InterPro" id="IPR026520">
    <property type="entry name" value="THAP3"/>
</dbReference>
<dbReference type="InterPro" id="IPR006612">
    <property type="entry name" value="THAP_Znf"/>
</dbReference>
<dbReference type="PANTHER" id="PTHR47120">
    <property type="entry name" value="THAP DOMAIN-CONTAINING PROTEIN 3"/>
    <property type="match status" value="1"/>
</dbReference>
<dbReference type="PANTHER" id="PTHR47120:SF1">
    <property type="entry name" value="THAP DOMAIN-CONTAINING PROTEIN 3"/>
    <property type="match status" value="1"/>
</dbReference>
<dbReference type="Pfam" id="PF05485">
    <property type="entry name" value="THAP"/>
    <property type="match status" value="1"/>
</dbReference>
<dbReference type="SMART" id="SM00692">
    <property type="entry name" value="DM3"/>
    <property type="match status" value="1"/>
</dbReference>
<dbReference type="SMART" id="SM00980">
    <property type="entry name" value="THAP"/>
    <property type="match status" value="1"/>
</dbReference>
<dbReference type="SUPFAM" id="SSF57716">
    <property type="entry name" value="Glucocorticoid receptor-like (DNA-binding domain)"/>
    <property type="match status" value="1"/>
</dbReference>
<dbReference type="PROSITE" id="PS50950">
    <property type="entry name" value="ZF_THAP"/>
    <property type="match status" value="1"/>
</dbReference>
<sequence>MPKSCAARQCCNRYSNRRKQLTFHRFPFSRPELLKEWVLNIGRGDFEPKQHTVICSEHFRPECFSAFGNRKNLKHNAVPTVFAFQGPPQLVRENTDPTGRSGDATSGERKVLPETGSGECGLGRKMDTTVEVLQLPPEVGGLGAQVPPHTPETSGVPGQPASPPELKRRLPTQPSDHSYALLDLDTLKKKLFLTLKENEKLRRRLKAQRLVMRRMCSRLRARLAGRPGLQARPRLGQQS</sequence>
<keyword id="KW-0238">DNA-binding</keyword>
<keyword id="KW-0479">Metal-binding</keyword>
<keyword id="KW-1185">Reference proteome</keyword>
<keyword id="KW-0862">Zinc</keyword>
<keyword id="KW-0863">Zinc-finger</keyword>
<comment type="function">
    <text evidence="1">Component of a THAP1/THAP3-HCFC1-OGT complex that is required for the regulation of the transcriptional activity of RRM1.</text>
</comment>
<comment type="subunit">
    <text evidence="1">Component of a THAP1/THAP3-HCFC1-OGT complex that contains at least, either THAP1 or THAP3, HCFC1 and OGT. Interacts directly with OGT and HCFC1 (via its HBM) (By similarity).</text>
</comment>
<protein>
    <recommendedName>
        <fullName>THAP domain-containing protein 3</fullName>
    </recommendedName>
</protein>
<proteinExistence type="evidence at transcript level"/>
<reference key="1">
    <citation type="submission" date="2006-08" db="EMBL/GenBank/DDBJ databases">
        <authorList>
            <consortium name="NIH - Mammalian Gene Collection (MGC) project"/>
        </authorList>
    </citation>
    <scope>NUCLEOTIDE SEQUENCE [LARGE SCALE MRNA]</scope>
    <source>
        <strain>Hereford</strain>
        <tissue>Fetal medulla</tissue>
    </source>
</reference>
<feature type="chain" id="PRO_0000282327" description="THAP domain-containing protein 3">
    <location>
        <begin position="1"/>
        <end position="239"/>
    </location>
</feature>
<feature type="zinc finger region" description="THAP-type" evidence="2">
    <location>
        <begin position="1"/>
        <end position="82"/>
    </location>
</feature>
<feature type="region of interest" description="Disordered" evidence="3">
    <location>
        <begin position="88"/>
        <end position="125"/>
    </location>
</feature>
<feature type="region of interest" description="Disordered" evidence="3">
    <location>
        <begin position="139"/>
        <end position="174"/>
    </location>
</feature>
<feature type="short sequence motif" description="HCFC1-binding motif (HBM)" evidence="1">
    <location>
        <begin position="176"/>
        <end position="179"/>
    </location>
</feature>
<gene>
    <name type="primary">THAP3</name>
</gene>